<comment type="function">
    <text evidence="1">Catalyzes the base-exchange of a guanine (G) residue with the queuine precursor 7-aminomethyl-7-deazaguanine (PreQ1) at position 34 (anticodon wobble position) in tRNAs with GU(N) anticodons (tRNA-Asp, -Asn, -His and -Tyr). Catalysis occurs through a double-displacement mechanism. The nucleophile active site attacks the C1' of nucleotide 34 to detach the guanine base from the RNA, forming a covalent enzyme-RNA intermediate. The proton acceptor active site deprotonates the incoming PreQ1, allowing a nucleophilic attack on the C1' of the ribose to form the product. After dissociation, two additional enzymatic reactions on the tRNA convert PreQ1 to queuine (Q), resulting in the hypermodified nucleoside queuosine (7-(((4,5-cis-dihydroxy-2-cyclopenten-1-yl)amino)methyl)-7-deazaguanosine).</text>
</comment>
<comment type="catalytic activity">
    <reaction evidence="1">
        <text>7-aminomethyl-7-carbaguanine + guanosine(34) in tRNA = 7-aminomethyl-7-carbaguanosine(34) in tRNA + guanine</text>
        <dbReference type="Rhea" id="RHEA:24104"/>
        <dbReference type="Rhea" id="RHEA-COMP:10341"/>
        <dbReference type="Rhea" id="RHEA-COMP:10342"/>
        <dbReference type="ChEBI" id="CHEBI:16235"/>
        <dbReference type="ChEBI" id="CHEBI:58703"/>
        <dbReference type="ChEBI" id="CHEBI:74269"/>
        <dbReference type="ChEBI" id="CHEBI:82833"/>
        <dbReference type="EC" id="2.4.2.29"/>
    </reaction>
</comment>
<comment type="cofactor">
    <cofactor evidence="1">
        <name>Zn(2+)</name>
        <dbReference type="ChEBI" id="CHEBI:29105"/>
    </cofactor>
    <text evidence="1">Binds 1 zinc ion per subunit.</text>
</comment>
<comment type="pathway">
    <text evidence="1">tRNA modification; tRNA-queuosine biosynthesis.</text>
</comment>
<comment type="subunit">
    <text evidence="1">Homodimer. Within each dimer, one monomer is responsible for RNA recognition and catalysis, while the other monomer binds to the replacement base PreQ1.</text>
</comment>
<comment type="similarity">
    <text evidence="1">Belongs to the queuine tRNA-ribosyltransferase family.</text>
</comment>
<organism>
    <name type="scientific">Vibrio atlanticus (strain LGP32)</name>
    <name type="common">Vibrio splendidus (strain Mel32)</name>
    <dbReference type="NCBI Taxonomy" id="575788"/>
    <lineage>
        <taxon>Bacteria</taxon>
        <taxon>Pseudomonadati</taxon>
        <taxon>Pseudomonadota</taxon>
        <taxon>Gammaproteobacteria</taxon>
        <taxon>Vibrionales</taxon>
        <taxon>Vibrionaceae</taxon>
        <taxon>Vibrio</taxon>
    </lineage>
</organism>
<gene>
    <name evidence="1" type="primary">tgt</name>
    <name type="ordered locus">VS_0599</name>
</gene>
<protein>
    <recommendedName>
        <fullName evidence="1">Queuine tRNA-ribosyltransferase</fullName>
        <ecNumber evidence="1">2.4.2.29</ecNumber>
    </recommendedName>
    <alternativeName>
        <fullName evidence="1">Guanine insertion enzyme</fullName>
    </alternativeName>
    <alternativeName>
        <fullName evidence="1">tRNA-guanine transglycosylase</fullName>
    </alternativeName>
</protein>
<name>TGT_VIBA3</name>
<reference key="1">
    <citation type="submission" date="2009-02" db="EMBL/GenBank/DDBJ databases">
        <title>Vibrio splendidus str. LGP32 complete genome.</title>
        <authorList>
            <person name="Mazel D."/>
            <person name="Le Roux F."/>
        </authorList>
    </citation>
    <scope>NUCLEOTIDE SEQUENCE [LARGE SCALE GENOMIC DNA]</scope>
    <source>
        <strain>LGP32</strain>
    </source>
</reference>
<accession>B7VJR8</accession>
<proteinExistence type="inferred from homology"/>
<keyword id="KW-0328">Glycosyltransferase</keyword>
<keyword id="KW-0479">Metal-binding</keyword>
<keyword id="KW-0671">Queuosine biosynthesis</keyword>
<keyword id="KW-0808">Transferase</keyword>
<keyword id="KW-0819">tRNA processing</keyword>
<keyword id="KW-0862">Zinc</keyword>
<evidence type="ECO:0000255" key="1">
    <source>
        <dbReference type="HAMAP-Rule" id="MF_00168"/>
    </source>
</evidence>
<feature type="chain" id="PRO_1000198038" description="Queuine tRNA-ribosyltransferase">
    <location>
        <begin position="1"/>
        <end position="378"/>
    </location>
</feature>
<feature type="region of interest" description="RNA binding" evidence="1">
    <location>
        <begin position="247"/>
        <end position="253"/>
    </location>
</feature>
<feature type="region of interest" description="RNA binding; important for wobble base 34 recognition" evidence="1">
    <location>
        <begin position="271"/>
        <end position="275"/>
    </location>
</feature>
<feature type="active site" description="Proton acceptor" evidence="1">
    <location>
        <position position="91"/>
    </location>
</feature>
<feature type="active site" description="Nucleophile" evidence="1">
    <location>
        <position position="266"/>
    </location>
</feature>
<feature type="binding site" evidence="1">
    <location>
        <begin position="91"/>
        <end position="95"/>
    </location>
    <ligand>
        <name>substrate</name>
    </ligand>
</feature>
<feature type="binding site" evidence="1">
    <location>
        <position position="145"/>
    </location>
    <ligand>
        <name>substrate</name>
    </ligand>
</feature>
<feature type="binding site" evidence="1">
    <location>
        <position position="189"/>
    </location>
    <ligand>
        <name>substrate</name>
    </ligand>
</feature>
<feature type="binding site" evidence="1">
    <location>
        <position position="216"/>
    </location>
    <ligand>
        <name>substrate</name>
    </ligand>
</feature>
<feature type="binding site" evidence="1">
    <location>
        <position position="304"/>
    </location>
    <ligand>
        <name>Zn(2+)</name>
        <dbReference type="ChEBI" id="CHEBI:29105"/>
    </ligand>
</feature>
<feature type="binding site" evidence="1">
    <location>
        <position position="306"/>
    </location>
    <ligand>
        <name>Zn(2+)</name>
        <dbReference type="ChEBI" id="CHEBI:29105"/>
    </ligand>
</feature>
<feature type="binding site" evidence="1">
    <location>
        <position position="309"/>
    </location>
    <ligand>
        <name>Zn(2+)</name>
        <dbReference type="ChEBI" id="CHEBI:29105"/>
    </ligand>
</feature>
<feature type="binding site" evidence="1">
    <location>
        <position position="335"/>
    </location>
    <ligand>
        <name>Zn(2+)</name>
        <dbReference type="ChEBI" id="CHEBI:29105"/>
    </ligand>
</feature>
<dbReference type="EC" id="2.4.2.29" evidence="1"/>
<dbReference type="EMBL" id="FM954972">
    <property type="protein sequence ID" value="CAV17592.1"/>
    <property type="molecule type" value="Genomic_DNA"/>
</dbReference>
<dbReference type="SMR" id="B7VJR8"/>
<dbReference type="STRING" id="575788.VS_0599"/>
<dbReference type="KEGG" id="vsp:VS_0599"/>
<dbReference type="PATRIC" id="fig|575788.5.peg.1953"/>
<dbReference type="eggNOG" id="COG0343">
    <property type="taxonomic scope" value="Bacteria"/>
</dbReference>
<dbReference type="HOGENOM" id="CLU_022060_0_1_6"/>
<dbReference type="UniPathway" id="UPA00392"/>
<dbReference type="Proteomes" id="UP000009100">
    <property type="component" value="Chromosome 1"/>
</dbReference>
<dbReference type="GO" id="GO:0005829">
    <property type="term" value="C:cytosol"/>
    <property type="evidence" value="ECO:0007669"/>
    <property type="project" value="TreeGrafter"/>
</dbReference>
<dbReference type="GO" id="GO:0046872">
    <property type="term" value="F:metal ion binding"/>
    <property type="evidence" value="ECO:0007669"/>
    <property type="project" value="UniProtKB-KW"/>
</dbReference>
<dbReference type="GO" id="GO:0008479">
    <property type="term" value="F:tRNA-guanosine(34) queuine transglycosylase activity"/>
    <property type="evidence" value="ECO:0007669"/>
    <property type="project" value="UniProtKB-UniRule"/>
</dbReference>
<dbReference type="GO" id="GO:0008616">
    <property type="term" value="P:queuosine biosynthetic process"/>
    <property type="evidence" value="ECO:0007669"/>
    <property type="project" value="UniProtKB-UniRule"/>
</dbReference>
<dbReference type="GO" id="GO:0002099">
    <property type="term" value="P:tRNA wobble guanine modification"/>
    <property type="evidence" value="ECO:0007669"/>
    <property type="project" value="TreeGrafter"/>
</dbReference>
<dbReference type="GO" id="GO:0101030">
    <property type="term" value="P:tRNA-guanine transglycosylation"/>
    <property type="evidence" value="ECO:0007669"/>
    <property type="project" value="InterPro"/>
</dbReference>
<dbReference type="FunFam" id="3.20.20.105:FF:000001">
    <property type="entry name" value="Queuine tRNA-ribosyltransferase"/>
    <property type="match status" value="1"/>
</dbReference>
<dbReference type="Gene3D" id="3.20.20.105">
    <property type="entry name" value="Queuine tRNA-ribosyltransferase-like"/>
    <property type="match status" value="1"/>
</dbReference>
<dbReference type="HAMAP" id="MF_00168">
    <property type="entry name" value="Q_tRNA_Tgt"/>
    <property type="match status" value="1"/>
</dbReference>
<dbReference type="InterPro" id="IPR050076">
    <property type="entry name" value="ArchSynthase1/Queuine_TRR"/>
</dbReference>
<dbReference type="InterPro" id="IPR004803">
    <property type="entry name" value="TGT"/>
</dbReference>
<dbReference type="InterPro" id="IPR036511">
    <property type="entry name" value="TGT-like_sf"/>
</dbReference>
<dbReference type="InterPro" id="IPR002616">
    <property type="entry name" value="tRNA_ribo_trans-like"/>
</dbReference>
<dbReference type="NCBIfam" id="TIGR00430">
    <property type="entry name" value="Q_tRNA_tgt"/>
    <property type="match status" value="1"/>
</dbReference>
<dbReference type="NCBIfam" id="TIGR00449">
    <property type="entry name" value="tgt_general"/>
    <property type="match status" value="1"/>
</dbReference>
<dbReference type="PANTHER" id="PTHR46499">
    <property type="entry name" value="QUEUINE TRNA-RIBOSYLTRANSFERASE"/>
    <property type="match status" value="1"/>
</dbReference>
<dbReference type="PANTHER" id="PTHR46499:SF1">
    <property type="entry name" value="QUEUINE TRNA-RIBOSYLTRANSFERASE"/>
    <property type="match status" value="1"/>
</dbReference>
<dbReference type="Pfam" id="PF01702">
    <property type="entry name" value="TGT"/>
    <property type="match status" value="1"/>
</dbReference>
<dbReference type="SUPFAM" id="SSF51713">
    <property type="entry name" value="tRNA-guanine transglycosylase"/>
    <property type="match status" value="1"/>
</dbReference>
<sequence>MKLKYELKKTNSGARRGQLQFERGTVETPAFMPVGTYGTVKGMTPEEVKDTGAEILLGNTFHLWLRPGQEIMKLHGDLHDFMNWKGPILTDSGGFQVFSLGATRKITEEGVHFRNPVNGDKIFMDAEKSMEIQKDLGSDIVMIFDECTPYPATHKEAKDSMEMSLRWAQRSRDHFDKQENPNSLFGIVQGGVYEDLRDVSVKGLTEIGFDGYAVGGLAVGEPKEDMHRILEHTCPQLPEDKPRYLMGVGKPEDLVEGVRRGIDMFDCVMPTRNARNGHLFVTEGVIKIRNAKHKTDTTPLDSDCDCYTCKNYSKSYLHHLDRCNEILGARLNTIHNLRFYQRVMSDIRQSIDEDRFEEFVAEFYARMGREVPPLGKES</sequence>